<comment type="function">
    <text evidence="1">Catalytic subunit of the slx1-slx4 structure-specific endonuclease that resolves DNA secondary structures generated during DNA repair and recombination. Has endonuclease activity towards branched DNA substrates, introducing single-strand cuts in duplex DNA close to junctions with ss-DNA.</text>
</comment>
<comment type="cofactor">
    <cofactor evidence="1">
        <name>a divalent metal cation</name>
        <dbReference type="ChEBI" id="CHEBI:60240"/>
    </cofactor>
</comment>
<comment type="subunit">
    <text evidence="1">Forms a heterodimer with slx4.</text>
</comment>
<comment type="subcellular location">
    <subcellularLocation>
        <location evidence="1">Nucleus</location>
    </subcellularLocation>
</comment>
<comment type="similarity">
    <text evidence="1">Belongs to the SLX1 family.</text>
</comment>
<gene>
    <name type="primary">slx1</name>
    <name type="ORF">ACLA_001730</name>
</gene>
<evidence type="ECO:0000255" key="1">
    <source>
        <dbReference type="HAMAP-Rule" id="MF_03100"/>
    </source>
</evidence>
<evidence type="ECO:0000256" key="2">
    <source>
        <dbReference type="SAM" id="MobiDB-lite"/>
    </source>
</evidence>
<proteinExistence type="inferred from homology"/>
<sequence>MENIQLEHSKPIPAFYCCYLLRSTVRHASLYIGSTPNPARRLTQHNGVVKGGARRTAAEKLRPWEMVMIVEGFMSRLGALQFEWAWQNPGYSRHLRSEEEGLEAPGTTSTTKPKTTRRAKSQTPQPLEFERDPSVSKSLGTPKRKNQRRRRPQRSLTTHFADLHRLLQSPYFSNWPLRIRFFSADVYQSWKAWYDRVDIFLPGHVNILLDGSCPENSAQCSAVGARFGSVEQAKVNYDIIQDYLEKAMFLLDDPKDLSCRVCQTQIAPKEQLAVVCPQAGCHCTCHLLCLSKKFLDAMPEPDCLIPRHGACPACKATVQWSLMMQELSFRSRGEQEALAILKRKRRLDRRQQVISKAKCAGKGVDSSDVRPTSVDLDRSNNNASDDLLLDDDWFDEFASESDSDTGHRSKALSKAAPNLETVVEDSEGDDLEFL</sequence>
<accession>A1C4Z4</accession>
<dbReference type="EC" id="3.1.-.-" evidence="1"/>
<dbReference type="EMBL" id="DS027004">
    <property type="protein sequence ID" value="EAW14762.1"/>
    <property type="molecule type" value="Genomic_DNA"/>
</dbReference>
<dbReference type="RefSeq" id="XP_001276188.1">
    <property type="nucleotide sequence ID" value="XM_001276187.1"/>
</dbReference>
<dbReference type="SMR" id="A1C4Z4"/>
<dbReference type="STRING" id="344612.A1C4Z4"/>
<dbReference type="EnsemblFungi" id="EAW14762">
    <property type="protein sequence ID" value="EAW14762"/>
    <property type="gene ID" value="ACLA_001730"/>
</dbReference>
<dbReference type="GeneID" id="4708623"/>
<dbReference type="KEGG" id="act:ACLA_001730"/>
<dbReference type="VEuPathDB" id="FungiDB:ACLA_001730"/>
<dbReference type="eggNOG" id="KOG3005">
    <property type="taxonomic scope" value="Eukaryota"/>
</dbReference>
<dbReference type="HOGENOM" id="CLU_030739_1_0_1"/>
<dbReference type="OMA" id="HNRGCDF"/>
<dbReference type="OrthoDB" id="24645at2759"/>
<dbReference type="Proteomes" id="UP000006701">
    <property type="component" value="Unassembled WGS sequence"/>
</dbReference>
<dbReference type="GO" id="GO:0033557">
    <property type="term" value="C:Slx1-Slx4 complex"/>
    <property type="evidence" value="ECO:0007669"/>
    <property type="project" value="UniProtKB-UniRule"/>
</dbReference>
<dbReference type="GO" id="GO:0017108">
    <property type="term" value="F:5'-flap endonuclease activity"/>
    <property type="evidence" value="ECO:0007669"/>
    <property type="project" value="InterPro"/>
</dbReference>
<dbReference type="GO" id="GO:0008821">
    <property type="term" value="F:crossover junction DNA endonuclease activity"/>
    <property type="evidence" value="ECO:0007669"/>
    <property type="project" value="TreeGrafter"/>
</dbReference>
<dbReference type="GO" id="GO:0008270">
    <property type="term" value="F:zinc ion binding"/>
    <property type="evidence" value="ECO:0007669"/>
    <property type="project" value="UniProtKB-KW"/>
</dbReference>
<dbReference type="GO" id="GO:0000724">
    <property type="term" value="P:double-strand break repair via homologous recombination"/>
    <property type="evidence" value="ECO:0007669"/>
    <property type="project" value="TreeGrafter"/>
</dbReference>
<dbReference type="CDD" id="cd10455">
    <property type="entry name" value="GIY-YIG_SLX1"/>
    <property type="match status" value="1"/>
</dbReference>
<dbReference type="FunFam" id="3.40.1440.10:FF:000006">
    <property type="entry name" value="Structure-specific endonuclease subunit SLX1"/>
    <property type="match status" value="1"/>
</dbReference>
<dbReference type="Gene3D" id="3.40.1440.10">
    <property type="entry name" value="GIY-YIG endonuclease"/>
    <property type="match status" value="1"/>
</dbReference>
<dbReference type="Gene3D" id="3.30.40.10">
    <property type="entry name" value="Zinc/RING finger domain, C3HC4 (zinc finger)"/>
    <property type="match status" value="1"/>
</dbReference>
<dbReference type="HAMAP" id="MF_03100">
    <property type="entry name" value="Endonuc_su_Slx1"/>
    <property type="match status" value="1"/>
</dbReference>
<dbReference type="InterPro" id="IPR000305">
    <property type="entry name" value="GIY-YIG_endonuc"/>
</dbReference>
<dbReference type="InterPro" id="IPR035901">
    <property type="entry name" value="GIY-YIG_endonuc_sf"/>
</dbReference>
<dbReference type="InterPro" id="IPR027520">
    <property type="entry name" value="Slx1"/>
</dbReference>
<dbReference type="InterPro" id="IPR048749">
    <property type="entry name" value="SLX1_C"/>
</dbReference>
<dbReference type="InterPro" id="IPR050381">
    <property type="entry name" value="SLX1_endonuclease"/>
</dbReference>
<dbReference type="InterPro" id="IPR013083">
    <property type="entry name" value="Znf_RING/FYVE/PHD"/>
</dbReference>
<dbReference type="PANTHER" id="PTHR20208">
    <property type="entry name" value="STRUCTURE-SPECIFIC ENDONUCLEASE SUBUNIT SLX1"/>
    <property type="match status" value="1"/>
</dbReference>
<dbReference type="PANTHER" id="PTHR20208:SF10">
    <property type="entry name" value="STRUCTURE-SPECIFIC ENDONUCLEASE SUBUNIT SLX1"/>
    <property type="match status" value="1"/>
</dbReference>
<dbReference type="Pfam" id="PF01541">
    <property type="entry name" value="GIY-YIG"/>
    <property type="match status" value="1"/>
</dbReference>
<dbReference type="Pfam" id="PF21202">
    <property type="entry name" value="SLX1_C"/>
    <property type="match status" value="1"/>
</dbReference>
<dbReference type="SUPFAM" id="SSF82771">
    <property type="entry name" value="GIY-YIG endonuclease"/>
    <property type="match status" value="1"/>
</dbReference>
<dbReference type="PROSITE" id="PS50164">
    <property type="entry name" value="GIY_YIG"/>
    <property type="match status" value="1"/>
</dbReference>
<feature type="chain" id="PRO_0000383772" description="Structure-specific endonuclease subunit slx1">
    <location>
        <begin position="1"/>
        <end position="434"/>
    </location>
</feature>
<feature type="domain" description="GIY-YIG" evidence="1">
    <location>
        <begin position="14"/>
        <end position="97"/>
    </location>
</feature>
<feature type="zinc finger region" description="SLX1-type" evidence="1">
    <location>
        <begin position="259"/>
        <end position="314"/>
    </location>
</feature>
<feature type="region of interest" description="Disordered" evidence="2">
    <location>
        <begin position="96"/>
        <end position="154"/>
    </location>
</feature>
<feature type="region of interest" description="Disordered" evidence="2">
    <location>
        <begin position="362"/>
        <end position="381"/>
    </location>
</feature>
<feature type="region of interest" description="Disordered" evidence="2">
    <location>
        <begin position="399"/>
        <end position="434"/>
    </location>
</feature>
<feature type="compositionally biased region" description="Low complexity" evidence="2">
    <location>
        <begin position="104"/>
        <end position="113"/>
    </location>
</feature>
<feature type="compositionally biased region" description="Basic residues" evidence="2">
    <location>
        <begin position="142"/>
        <end position="153"/>
    </location>
</feature>
<feature type="compositionally biased region" description="Acidic residues" evidence="2">
    <location>
        <begin position="422"/>
        <end position="434"/>
    </location>
</feature>
<keyword id="KW-0227">DNA damage</keyword>
<keyword id="KW-0233">DNA recombination</keyword>
<keyword id="KW-0234">DNA repair</keyword>
<keyword id="KW-0255">Endonuclease</keyword>
<keyword id="KW-0378">Hydrolase</keyword>
<keyword id="KW-0479">Metal-binding</keyword>
<keyword id="KW-0540">Nuclease</keyword>
<keyword id="KW-0539">Nucleus</keyword>
<keyword id="KW-1185">Reference proteome</keyword>
<keyword id="KW-0862">Zinc</keyword>
<keyword id="KW-0863">Zinc-finger</keyword>
<organism>
    <name type="scientific">Aspergillus clavatus (strain ATCC 1007 / CBS 513.65 / DSM 816 / NCTC 3887 / NRRL 1 / QM 1276 / 107)</name>
    <dbReference type="NCBI Taxonomy" id="344612"/>
    <lineage>
        <taxon>Eukaryota</taxon>
        <taxon>Fungi</taxon>
        <taxon>Dikarya</taxon>
        <taxon>Ascomycota</taxon>
        <taxon>Pezizomycotina</taxon>
        <taxon>Eurotiomycetes</taxon>
        <taxon>Eurotiomycetidae</taxon>
        <taxon>Eurotiales</taxon>
        <taxon>Aspergillaceae</taxon>
        <taxon>Aspergillus</taxon>
        <taxon>Aspergillus subgen. Fumigati</taxon>
    </lineage>
</organism>
<protein>
    <recommendedName>
        <fullName evidence="1">Structure-specific endonuclease subunit slx1</fullName>
        <ecNumber evidence="1">3.1.-.-</ecNumber>
    </recommendedName>
</protein>
<name>SLX1_ASPCL</name>
<reference key="1">
    <citation type="journal article" date="2008" name="PLoS Genet.">
        <title>Genomic islands in the pathogenic filamentous fungus Aspergillus fumigatus.</title>
        <authorList>
            <person name="Fedorova N.D."/>
            <person name="Khaldi N."/>
            <person name="Joardar V.S."/>
            <person name="Maiti R."/>
            <person name="Amedeo P."/>
            <person name="Anderson M.J."/>
            <person name="Crabtree J."/>
            <person name="Silva J.C."/>
            <person name="Badger J.H."/>
            <person name="Albarraq A."/>
            <person name="Angiuoli S."/>
            <person name="Bussey H."/>
            <person name="Bowyer P."/>
            <person name="Cotty P.J."/>
            <person name="Dyer P.S."/>
            <person name="Egan A."/>
            <person name="Galens K."/>
            <person name="Fraser-Liggett C.M."/>
            <person name="Haas B.J."/>
            <person name="Inman J.M."/>
            <person name="Kent R."/>
            <person name="Lemieux S."/>
            <person name="Malavazi I."/>
            <person name="Orvis J."/>
            <person name="Roemer T."/>
            <person name="Ronning C.M."/>
            <person name="Sundaram J.P."/>
            <person name="Sutton G."/>
            <person name="Turner G."/>
            <person name="Venter J.C."/>
            <person name="White O.R."/>
            <person name="Whitty B.R."/>
            <person name="Youngman P."/>
            <person name="Wolfe K.H."/>
            <person name="Goldman G.H."/>
            <person name="Wortman J.R."/>
            <person name="Jiang B."/>
            <person name="Denning D.W."/>
            <person name="Nierman W.C."/>
        </authorList>
    </citation>
    <scope>NUCLEOTIDE SEQUENCE [LARGE SCALE GENOMIC DNA]</scope>
    <source>
        <strain>ATCC 1007 / CBS 513.65 / DSM 816 / NCTC 3887 / NRRL 1 / QM 1276 / 107</strain>
    </source>
</reference>